<reference key="1">
    <citation type="journal article" date="2003" name="Science">
        <title>Role of mobile DNA in the evolution of vancomycin-resistant Enterococcus faecalis.</title>
        <authorList>
            <person name="Paulsen I.T."/>
            <person name="Banerjei L."/>
            <person name="Myers G.S.A."/>
            <person name="Nelson K.E."/>
            <person name="Seshadri R."/>
            <person name="Read T.D."/>
            <person name="Fouts D.E."/>
            <person name="Eisen J.A."/>
            <person name="Gill S.R."/>
            <person name="Heidelberg J.F."/>
            <person name="Tettelin H."/>
            <person name="Dodson R.J."/>
            <person name="Umayam L.A."/>
            <person name="Brinkac L.M."/>
            <person name="Beanan M.J."/>
            <person name="Daugherty S.C."/>
            <person name="DeBoy R.T."/>
            <person name="Durkin S.A."/>
            <person name="Kolonay J.F."/>
            <person name="Madupu R."/>
            <person name="Nelson W.C."/>
            <person name="Vamathevan J.J."/>
            <person name="Tran B."/>
            <person name="Upton J."/>
            <person name="Hansen T."/>
            <person name="Shetty J."/>
            <person name="Khouri H.M."/>
            <person name="Utterback T.R."/>
            <person name="Radune D."/>
            <person name="Ketchum K.A."/>
            <person name="Dougherty B.A."/>
            <person name="Fraser C.M."/>
        </authorList>
    </citation>
    <scope>NUCLEOTIDE SEQUENCE [LARGE SCALE GENOMIC DNA]</scope>
    <source>
        <strain>ATCC 700802 / V583</strain>
    </source>
</reference>
<organism>
    <name type="scientific">Enterococcus faecalis (strain ATCC 700802 / V583)</name>
    <dbReference type="NCBI Taxonomy" id="226185"/>
    <lineage>
        <taxon>Bacteria</taxon>
        <taxon>Bacillati</taxon>
        <taxon>Bacillota</taxon>
        <taxon>Bacilli</taxon>
        <taxon>Lactobacillales</taxon>
        <taxon>Enterococcaceae</taxon>
        <taxon>Enterococcus</taxon>
    </lineage>
</organism>
<feature type="chain" id="PRO_0000187738" description="Peptidyl-tRNA hydrolase">
    <location>
        <begin position="1"/>
        <end position="188"/>
    </location>
</feature>
<feature type="active site" description="Proton acceptor" evidence="1">
    <location>
        <position position="19"/>
    </location>
</feature>
<feature type="binding site" evidence="1">
    <location>
        <position position="14"/>
    </location>
    <ligand>
        <name>tRNA</name>
        <dbReference type="ChEBI" id="CHEBI:17843"/>
    </ligand>
</feature>
<feature type="binding site" evidence="1">
    <location>
        <position position="64"/>
    </location>
    <ligand>
        <name>tRNA</name>
        <dbReference type="ChEBI" id="CHEBI:17843"/>
    </ligand>
</feature>
<feature type="binding site" evidence="1">
    <location>
        <position position="66"/>
    </location>
    <ligand>
        <name>tRNA</name>
        <dbReference type="ChEBI" id="CHEBI:17843"/>
    </ligand>
</feature>
<feature type="binding site" evidence="1">
    <location>
        <position position="112"/>
    </location>
    <ligand>
        <name>tRNA</name>
        <dbReference type="ChEBI" id="CHEBI:17843"/>
    </ligand>
</feature>
<feature type="site" description="Discriminates between blocked and unblocked aminoacyl-tRNA" evidence="1">
    <location>
        <position position="9"/>
    </location>
</feature>
<feature type="site" description="Stabilizes the basic form of H active site to accept a proton" evidence="1">
    <location>
        <position position="91"/>
    </location>
</feature>
<gene>
    <name evidence="1" type="primary">pth</name>
    <name type="ordered locus">EF_0256</name>
</gene>
<dbReference type="EC" id="3.1.1.29" evidence="1"/>
<dbReference type="EMBL" id="AE016830">
    <property type="protein sequence ID" value="AAO80121.1"/>
    <property type="molecule type" value="Genomic_DNA"/>
</dbReference>
<dbReference type="RefSeq" id="NP_814050.1">
    <property type="nucleotide sequence ID" value="NC_004668.1"/>
</dbReference>
<dbReference type="RefSeq" id="WP_002379221.1">
    <property type="nucleotide sequence ID" value="NZ_KE136524.1"/>
</dbReference>
<dbReference type="SMR" id="Q839C0"/>
<dbReference type="STRING" id="226185.EF_0256"/>
<dbReference type="EnsemblBacteria" id="AAO80121">
    <property type="protein sequence ID" value="AAO80121"/>
    <property type="gene ID" value="EF_0256"/>
</dbReference>
<dbReference type="KEGG" id="efa:EF0256"/>
<dbReference type="PATRIC" id="fig|226185.45.peg.13"/>
<dbReference type="eggNOG" id="COG0193">
    <property type="taxonomic scope" value="Bacteria"/>
</dbReference>
<dbReference type="HOGENOM" id="CLU_062456_4_1_9"/>
<dbReference type="Proteomes" id="UP000001415">
    <property type="component" value="Chromosome"/>
</dbReference>
<dbReference type="GO" id="GO:0005737">
    <property type="term" value="C:cytoplasm"/>
    <property type="evidence" value="ECO:0007669"/>
    <property type="project" value="UniProtKB-SubCell"/>
</dbReference>
<dbReference type="GO" id="GO:0004045">
    <property type="term" value="F:peptidyl-tRNA hydrolase activity"/>
    <property type="evidence" value="ECO:0007669"/>
    <property type="project" value="UniProtKB-UniRule"/>
</dbReference>
<dbReference type="GO" id="GO:0000049">
    <property type="term" value="F:tRNA binding"/>
    <property type="evidence" value="ECO:0007669"/>
    <property type="project" value="UniProtKB-UniRule"/>
</dbReference>
<dbReference type="GO" id="GO:0006515">
    <property type="term" value="P:protein quality control for misfolded or incompletely synthesized proteins"/>
    <property type="evidence" value="ECO:0007669"/>
    <property type="project" value="UniProtKB-UniRule"/>
</dbReference>
<dbReference type="GO" id="GO:0072344">
    <property type="term" value="P:rescue of stalled ribosome"/>
    <property type="evidence" value="ECO:0007669"/>
    <property type="project" value="UniProtKB-UniRule"/>
</dbReference>
<dbReference type="CDD" id="cd00462">
    <property type="entry name" value="PTH"/>
    <property type="match status" value="1"/>
</dbReference>
<dbReference type="FunFam" id="3.40.50.1470:FF:000001">
    <property type="entry name" value="Peptidyl-tRNA hydrolase"/>
    <property type="match status" value="1"/>
</dbReference>
<dbReference type="Gene3D" id="3.40.50.1470">
    <property type="entry name" value="Peptidyl-tRNA hydrolase"/>
    <property type="match status" value="1"/>
</dbReference>
<dbReference type="HAMAP" id="MF_00083">
    <property type="entry name" value="Pept_tRNA_hydro_bact"/>
    <property type="match status" value="1"/>
</dbReference>
<dbReference type="InterPro" id="IPR001328">
    <property type="entry name" value="Pept_tRNA_hydro"/>
</dbReference>
<dbReference type="InterPro" id="IPR018171">
    <property type="entry name" value="Pept_tRNA_hydro_CS"/>
</dbReference>
<dbReference type="InterPro" id="IPR036416">
    <property type="entry name" value="Pept_tRNA_hydro_sf"/>
</dbReference>
<dbReference type="NCBIfam" id="TIGR00447">
    <property type="entry name" value="pth"/>
    <property type="match status" value="1"/>
</dbReference>
<dbReference type="PANTHER" id="PTHR17224">
    <property type="entry name" value="PEPTIDYL-TRNA HYDROLASE"/>
    <property type="match status" value="1"/>
</dbReference>
<dbReference type="PANTHER" id="PTHR17224:SF1">
    <property type="entry name" value="PEPTIDYL-TRNA HYDROLASE"/>
    <property type="match status" value="1"/>
</dbReference>
<dbReference type="Pfam" id="PF01195">
    <property type="entry name" value="Pept_tRNA_hydro"/>
    <property type="match status" value="1"/>
</dbReference>
<dbReference type="SUPFAM" id="SSF53178">
    <property type="entry name" value="Peptidyl-tRNA hydrolase-like"/>
    <property type="match status" value="1"/>
</dbReference>
<dbReference type="PROSITE" id="PS01195">
    <property type="entry name" value="PEPT_TRNA_HYDROL_1"/>
    <property type="match status" value="1"/>
</dbReference>
<dbReference type="PROSITE" id="PS01196">
    <property type="entry name" value="PEPT_TRNA_HYDROL_2"/>
    <property type="match status" value="1"/>
</dbReference>
<proteinExistence type="inferred from homology"/>
<sequence length="188" mass="20808">MKVIVGLGNPGSKYKETKHNIGFITLDEIAYRQNVSFNNSNFEADIAEFFIGTEKVLLVKPLTFMNESGRSVGPLLTYFGVDEEDLIVIYDDLDLEIGKIRLRQKGSAGGHNGIKSLIAHLGTNVFPRIKIGIGRPSKNDTVIHHVLSTFPKETHEEMLLAVKKAADAALYACEGHTFVETMNQFNGK</sequence>
<protein>
    <recommendedName>
        <fullName evidence="1">Peptidyl-tRNA hydrolase</fullName>
        <shortName evidence="1">Pth</shortName>
        <ecNumber evidence="1">3.1.1.29</ecNumber>
    </recommendedName>
</protein>
<evidence type="ECO:0000255" key="1">
    <source>
        <dbReference type="HAMAP-Rule" id="MF_00083"/>
    </source>
</evidence>
<keyword id="KW-0963">Cytoplasm</keyword>
<keyword id="KW-0378">Hydrolase</keyword>
<keyword id="KW-1185">Reference proteome</keyword>
<keyword id="KW-0694">RNA-binding</keyword>
<keyword id="KW-0820">tRNA-binding</keyword>
<name>PTH_ENTFA</name>
<accession>Q839C0</accession>
<comment type="function">
    <text evidence="1">Hydrolyzes ribosome-free peptidyl-tRNAs (with 1 or more amino acids incorporated), which drop off the ribosome during protein synthesis, or as a result of ribosome stalling.</text>
</comment>
<comment type="function">
    <text evidence="1">Catalyzes the release of premature peptidyl moieties from peptidyl-tRNA molecules trapped in stalled 50S ribosomal subunits, and thus maintains levels of free tRNAs and 50S ribosomes.</text>
</comment>
<comment type="catalytic activity">
    <reaction evidence="1">
        <text>an N-acyl-L-alpha-aminoacyl-tRNA + H2O = an N-acyl-L-amino acid + a tRNA + H(+)</text>
        <dbReference type="Rhea" id="RHEA:54448"/>
        <dbReference type="Rhea" id="RHEA-COMP:10123"/>
        <dbReference type="Rhea" id="RHEA-COMP:13883"/>
        <dbReference type="ChEBI" id="CHEBI:15377"/>
        <dbReference type="ChEBI" id="CHEBI:15378"/>
        <dbReference type="ChEBI" id="CHEBI:59874"/>
        <dbReference type="ChEBI" id="CHEBI:78442"/>
        <dbReference type="ChEBI" id="CHEBI:138191"/>
        <dbReference type="EC" id="3.1.1.29"/>
    </reaction>
</comment>
<comment type="subunit">
    <text evidence="1">Monomer.</text>
</comment>
<comment type="subcellular location">
    <subcellularLocation>
        <location evidence="1">Cytoplasm</location>
    </subcellularLocation>
</comment>
<comment type="similarity">
    <text evidence="1">Belongs to the PTH family.</text>
</comment>